<gene>
    <name type="primary">ac</name>
    <name type="synonym">52.2</name>
</gene>
<feature type="chain" id="PRO_0000164914" description="Uncharacterized protein 52.2">
    <location>
        <begin position="1"/>
        <end position="51"/>
    </location>
</feature>
<feature type="transmembrane region" description="Helical" evidence="1">
    <location>
        <begin position="6"/>
        <end position="26"/>
    </location>
</feature>
<feature type="transmembrane region" description="Helical" evidence="1">
    <location>
        <begin position="28"/>
        <end position="48"/>
    </location>
</feature>
<protein>
    <recommendedName>
        <fullName>Uncharacterized protein 52.2</fullName>
    </recommendedName>
</protein>
<proteinExistence type="predicted"/>
<dbReference type="EMBL" id="AF158101">
    <property type="protein sequence ID" value="AAD42488.1"/>
    <property type="molecule type" value="Genomic_DNA"/>
</dbReference>
<dbReference type="PIR" id="S01870">
    <property type="entry name" value="S01870"/>
</dbReference>
<dbReference type="RefSeq" id="NP_049877.1">
    <property type="nucleotide sequence ID" value="NC_000866.4"/>
</dbReference>
<dbReference type="GeneID" id="1258681"/>
<dbReference type="KEGG" id="vg:1258681"/>
<dbReference type="OrthoDB" id="26403at10239"/>
<dbReference type="Proteomes" id="UP000009087">
    <property type="component" value="Segment"/>
</dbReference>
<dbReference type="GO" id="GO:0033644">
    <property type="term" value="C:host cell membrane"/>
    <property type="evidence" value="ECO:0007669"/>
    <property type="project" value="UniProtKB-SubCell"/>
</dbReference>
<dbReference type="GO" id="GO:0016020">
    <property type="term" value="C:membrane"/>
    <property type="evidence" value="ECO:0007669"/>
    <property type="project" value="UniProtKB-KW"/>
</dbReference>
<dbReference type="GO" id="GO:0046677">
    <property type="term" value="P:response to antibiotic"/>
    <property type="evidence" value="ECO:0007669"/>
    <property type="project" value="UniProtKB-KW"/>
</dbReference>
<sequence length="51" mass="5472">MNIAKLLGVISFICWIVACVLTICIDASSVFSQALAQGMCAYLTFVLLSND</sequence>
<reference key="1">
    <citation type="journal article" date="1988" name="J. Mol. Biol.">
        <title>Nucleotide and deduced amino acid sequence of stp: the bacteriophage T4 anticodon nuclease gene.</title>
        <authorList>
            <person name="Chapman D."/>
            <person name="Morad I."/>
            <person name="Kaufmann G."/>
            <person name="Gait M.J."/>
            <person name="Jorissen L."/>
            <person name="Snyder L."/>
        </authorList>
    </citation>
    <scope>NUCLEOTIDE SEQUENCE [GENOMIC DNA]</scope>
</reference>
<reference key="2">
    <citation type="journal article" date="2003" name="Microbiol. Mol. Biol. Rev.">
        <title>Bacteriophage T4 genome.</title>
        <authorList>
            <person name="Miller E.S."/>
            <person name="Kutter E."/>
            <person name="Mosig G."/>
            <person name="Arisaka F."/>
            <person name="Kunisawa T."/>
            <person name="Ruger W."/>
        </authorList>
    </citation>
    <scope>NUCLEOTIDE SEQUENCE [LARGE SCALE GENOMIC DNA]</scope>
</reference>
<reference key="3">
    <citation type="journal article" date="1998" name="Genetics">
        <title>The spectrum of acridine resistant mutants of bacteriophage T4 reveals cryptic effects of the tsL141 DNA polymerase allele on spontaneous mutagenesis.</title>
        <authorList>
            <person name="Wang F.J."/>
            <person name="Ripley L.S."/>
        </authorList>
    </citation>
    <scope>DISRUPTION PHENOTYPE</scope>
</reference>
<comment type="subcellular location">
    <subcellularLocation>
        <location evidence="3">Host membrane</location>
        <topology evidence="3">Multi-pass membrane protein</topology>
    </subcellularLocation>
</comment>
<comment type="disruption phenotype">
    <text evidence="2">Mutations in the gene confer resistance to acridine-inhibition of phage development.</text>
</comment>
<evidence type="ECO:0000255" key="1"/>
<evidence type="ECO:0000269" key="2">
    <source>
    </source>
</evidence>
<evidence type="ECO:0000305" key="3"/>
<organism>
    <name type="scientific">Enterobacteria phage T4</name>
    <name type="common">Bacteriophage T4</name>
    <dbReference type="NCBI Taxonomy" id="10665"/>
    <lineage>
        <taxon>Viruses</taxon>
        <taxon>Duplodnaviria</taxon>
        <taxon>Heunggongvirae</taxon>
        <taxon>Uroviricota</taxon>
        <taxon>Caudoviricetes</taxon>
        <taxon>Straboviridae</taxon>
        <taxon>Tevenvirinae</taxon>
        <taxon>Tequatrovirus</taxon>
    </lineage>
</organism>
<name>AC_BPT4</name>
<organismHost>
    <name type="scientific">Escherichia coli</name>
    <dbReference type="NCBI Taxonomy" id="562"/>
</organismHost>
<keyword id="KW-0046">Antibiotic resistance</keyword>
<keyword id="KW-1043">Host membrane</keyword>
<keyword id="KW-0472">Membrane</keyword>
<keyword id="KW-1185">Reference proteome</keyword>
<keyword id="KW-0812">Transmembrane</keyword>
<keyword id="KW-1133">Transmembrane helix</keyword>
<accession>P18924</accession>